<gene>
    <name evidence="1" type="primary">moaC</name>
    <name type="ordered locus">Mmc1_1497</name>
</gene>
<evidence type="ECO:0000255" key="1">
    <source>
        <dbReference type="HAMAP-Rule" id="MF_01224"/>
    </source>
</evidence>
<accession>A0L7R3</accession>
<feature type="chain" id="PRO_1000054106" description="Cyclic pyranopterin monophosphate synthase">
    <location>
        <begin position="1"/>
        <end position="163"/>
    </location>
</feature>
<feature type="active site" evidence="1">
    <location>
        <position position="128"/>
    </location>
</feature>
<feature type="binding site" evidence="1">
    <location>
        <begin position="75"/>
        <end position="77"/>
    </location>
    <ligand>
        <name>substrate</name>
    </ligand>
</feature>
<feature type="binding site" evidence="1">
    <location>
        <begin position="113"/>
        <end position="114"/>
    </location>
    <ligand>
        <name>substrate</name>
    </ligand>
</feature>
<proteinExistence type="inferred from homology"/>
<keyword id="KW-0456">Lyase</keyword>
<keyword id="KW-0501">Molybdenum cofactor biosynthesis</keyword>
<keyword id="KW-1185">Reference proteome</keyword>
<name>MOAC_MAGMM</name>
<organism>
    <name type="scientific">Magnetococcus marinus (strain ATCC BAA-1437 / JCM 17883 / MC-1)</name>
    <dbReference type="NCBI Taxonomy" id="156889"/>
    <lineage>
        <taxon>Bacteria</taxon>
        <taxon>Pseudomonadati</taxon>
        <taxon>Pseudomonadota</taxon>
        <taxon>Alphaproteobacteria</taxon>
        <taxon>Magnetococcales</taxon>
        <taxon>Magnetococcaceae</taxon>
        <taxon>Magnetococcus</taxon>
    </lineage>
</organism>
<comment type="function">
    <text evidence="1">Catalyzes the conversion of (8S)-3',8-cyclo-7,8-dihydroguanosine 5'-triphosphate to cyclic pyranopterin monophosphate (cPMP).</text>
</comment>
<comment type="catalytic activity">
    <reaction evidence="1">
        <text>(8S)-3',8-cyclo-7,8-dihydroguanosine 5'-triphosphate = cyclic pyranopterin phosphate + diphosphate</text>
        <dbReference type="Rhea" id="RHEA:49580"/>
        <dbReference type="ChEBI" id="CHEBI:33019"/>
        <dbReference type="ChEBI" id="CHEBI:59648"/>
        <dbReference type="ChEBI" id="CHEBI:131766"/>
        <dbReference type="EC" id="4.6.1.17"/>
    </reaction>
</comment>
<comment type="pathway">
    <text evidence="1">Cofactor biosynthesis; molybdopterin biosynthesis.</text>
</comment>
<comment type="subunit">
    <text evidence="1">Homohexamer; trimer of dimers.</text>
</comment>
<comment type="similarity">
    <text evidence="1">Belongs to the MoaC family.</text>
</comment>
<sequence length="163" mass="17676">MGNLTHFDENGASRMVDVTEKPATERVAVAAGEITMRPQTLDRILRKGFEKGDVLEVARLAGIMAAKKVDGLIPLCHQINLTSVKLAFQPDEAHSRVVITAQVKCTAPTGVEMEALTAVSVAALTIYDMCKAMDREMVIGAVRLLEKSGGRSGHFVRDAQDRE</sequence>
<dbReference type="EC" id="4.6.1.17" evidence="1"/>
<dbReference type="EMBL" id="CP000471">
    <property type="protein sequence ID" value="ABK44006.1"/>
    <property type="molecule type" value="Genomic_DNA"/>
</dbReference>
<dbReference type="RefSeq" id="WP_011713159.1">
    <property type="nucleotide sequence ID" value="NC_008576.1"/>
</dbReference>
<dbReference type="SMR" id="A0L7R3"/>
<dbReference type="STRING" id="156889.Mmc1_1497"/>
<dbReference type="KEGG" id="mgm:Mmc1_1497"/>
<dbReference type="eggNOG" id="COG0315">
    <property type="taxonomic scope" value="Bacteria"/>
</dbReference>
<dbReference type="HOGENOM" id="CLU_074693_1_1_5"/>
<dbReference type="OrthoDB" id="9794429at2"/>
<dbReference type="UniPathway" id="UPA00344"/>
<dbReference type="Proteomes" id="UP000002586">
    <property type="component" value="Chromosome"/>
</dbReference>
<dbReference type="GO" id="GO:0061799">
    <property type="term" value="F:cyclic pyranopterin monophosphate synthase activity"/>
    <property type="evidence" value="ECO:0007669"/>
    <property type="project" value="UniProtKB-UniRule"/>
</dbReference>
<dbReference type="GO" id="GO:0006777">
    <property type="term" value="P:Mo-molybdopterin cofactor biosynthetic process"/>
    <property type="evidence" value="ECO:0007669"/>
    <property type="project" value="UniProtKB-UniRule"/>
</dbReference>
<dbReference type="CDD" id="cd01420">
    <property type="entry name" value="MoaC_PE"/>
    <property type="match status" value="1"/>
</dbReference>
<dbReference type="Gene3D" id="3.30.70.640">
    <property type="entry name" value="Molybdopterin cofactor biosynthesis C (MoaC) domain"/>
    <property type="match status" value="1"/>
</dbReference>
<dbReference type="HAMAP" id="MF_01224_B">
    <property type="entry name" value="MoaC_B"/>
    <property type="match status" value="1"/>
</dbReference>
<dbReference type="InterPro" id="IPR023045">
    <property type="entry name" value="MoaC"/>
</dbReference>
<dbReference type="InterPro" id="IPR047594">
    <property type="entry name" value="MoaC_bact/euk"/>
</dbReference>
<dbReference type="InterPro" id="IPR036522">
    <property type="entry name" value="MoaC_sf"/>
</dbReference>
<dbReference type="InterPro" id="IPR050105">
    <property type="entry name" value="MoCo_biosynth_MoaA/MoaC"/>
</dbReference>
<dbReference type="InterPro" id="IPR002820">
    <property type="entry name" value="Mopterin_CF_biosynth-C_dom"/>
</dbReference>
<dbReference type="NCBIfam" id="TIGR00581">
    <property type="entry name" value="moaC"/>
    <property type="match status" value="1"/>
</dbReference>
<dbReference type="NCBIfam" id="NF006870">
    <property type="entry name" value="PRK09364.1"/>
    <property type="match status" value="1"/>
</dbReference>
<dbReference type="PANTHER" id="PTHR22960:SF29">
    <property type="entry name" value="CYCLIC PYRANOPTERIN MONOPHOSPHATE SYNTHASE"/>
    <property type="match status" value="1"/>
</dbReference>
<dbReference type="PANTHER" id="PTHR22960">
    <property type="entry name" value="MOLYBDOPTERIN COFACTOR SYNTHESIS PROTEIN A"/>
    <property type="match status" value="1"/>
</dbReference>
<dbReference type="Pfam" id="PF01967">
    <property type="entry name" value="MoaC"/>
    <property type="match status" value="1"/>
</dbReference>
<dbReference type="SUPFAM" id="SSF55040">
    <property type="entry name" value="Molybdenum cofactor biosynthesis protein C, MoaC"/>
    <property type="match status" value="1"/>
</dbReference>
<protein>
    <recommendedName>
        <fullName evidence="1">Cyclic pyranopterin monophosphate synthase</fullName>
        <ecNumber evidence="1">4.6.1.17</ecNumber>
    </recommendedName>
    <alternativeName>
        <fullName evidence="1">Molybdenum cofactor biosynthesis protein C</fullName>
    </alternativeName>
</protein>
<reference key="1">
    <citation type="journal article" date="2009" name="Appl. Environ. Microbiol.">
        <title>Complete genome sequence of the chemolithoautotrophic marine magnetotactic coccus strain MC-1.</title>
        <authorList>
            <person name="Schubbe S."/>
            <person name="Williams T.J."/>
            <person name="Xie G."/>
            <person name="Kiss H.E."/>
            <person name="Brettin T.S."/>
            <person name="Martinez D."/>
            <person name="Ross C.A."/>
            <person name="Schuler D."/>
            <person name="Cox B.L."/>
            <person name="Nealson K.H."/>
            <person name="Bazylinski D.A."/>
        </authorList>
    </citation>
    <scope>NUCLEOTIDE SEQUENCE [LARGE SCALE GENOMIC DNA]</scope>
    <source>
        <strain>ATCC BAA-1437 / JCM 17883 / MC-1</strain>
    </source>
</reference>